<proteinExistence type="inferred from homology"/>
<dbReference type="EMBL" id="AY333760">
    <property type="protein sequence ID" value="AAR02621.1"/>
    <property type="molecule type" value="Genomic_DNA"/>
</dbReference>
<dbReference type="EMBL" id="AE006468">
    <property type="protein sequence ID" value="AAL20300.1"/>
    <property type="molecule type" value="Genomic_DNA"/>
</dbReference>
<dbReference type="RefSeq" id="NP_460341.1">
    <property type="nucleotide sequence ID" value="NC_003197.2"/>
</dbReference>
<dbReference type="RefSeq" id="WP_001082332.1">
    <property type="nucleotide sequence ID" value="NC_003197.2"/>
</dbReference>
<dbReference type="SMR" id="Q8ZPP9"/>
<dbReference type="STRING" id="99287.STM1376"/>
<dbReference type="PaxDb" id="99287-STM1376"/>
<dbReference type="GeneID" id="1252894"/>
<dbReference type="KEGG" id="stm:STM1376"/>
<dbReference type="PATRIC" id="fig|99287.12.peg.1459"/>
<dbReference type="HOGENOM" id="CLU_166934_2_1_6"/>
<dbReference type="OMA" id="ANDRIDN"/>
<dbReference type="PhylomeDB" id="Q8ZPP9"/>
<dbReference type="BioCyc" id="SENT99287:STM1376-MONOMER"/>
<dbReference type="Proteomes" id="UP000001014">
    <property type="component" value="Chromosome"/>
</dbReference>
<dbReference type="GO" id="GO:0009279">
    <property type="term" value="C:cell outer membrane"/>
    <property type="evidence" value="ECO:0007669"/>
    <property type="project" value="UniProtKB-SubCell"/>
</dbReference>
<dbReference type="GO" id="GO:0005576">
    <property type="term" value="C:extracellular region"/>
    <property type="evidence" value="ECO:0007669"/>
    <property type="project" value="UniProtKB-KW"/>
</dbReference>
<dbReference type="GO" id="GO:0008289">
    <property type="term" value="F:lipid binding"/>
    <property type="evidence" value="ECO:0007669"/>
    <property type="project" value="UniProtKB-UniRule"/>
</dbReference>
<dbReference type="GO" id="GO:0042834">
    <property type="term" value="F:peptidoglycan binding"/>
    <property type="evidence" value="ECO:0007669"/>
    <property type="project" value="UniProtKB-UniRule"/>
</dbReference>
<dbReference type="GO" id="GO:0030258">
    <property type="term" value="P:lipid modification"/>
    <property type="evidence" value="ECO:0007669"/>
    <property type="project" value="UniProtKB-UniRule"/>
</dbReference>
<dbReference type="GO" id="GO:0043580">
    <property type="term" value="P:periplasmic space organization"/>
    <property type="evidence" value="ECO:0007669"/>
    <property type="project" value="UniProtKB-UniRule"/>
</dbReference>
<dbReference type="FunFam" id="1.20.5.190:FF:000002">
    <property type="entry name" value="Major outer membrane lipoprotein"/>
    <property type="match status" value="1"/>
</dbReference>
<dbReference type="Gene3D" id="1.20.5.190">
    <property type="match status" value="1"/>
</dbReference>
<dbReference type="HAMAP" id="MF_00843">
    <property type="entry name" value="Lpp"/>
    <property type="match status" value="1"/>
</dbReference>
<dbReference type="InterPro" id="IPR006817">
    <property type="entry name" value="Lipoprotein_leucine-zipper_dom"/>
</dbReference>
<dbReference type="InterPro" id="IPR016367">
    <property type="entry name" value="MOM_Lpp"/>
</dbReference>
<dbReference type="NCBIfam" id="NF040598">
    <property type="entry name" value="Ala_zip_lipo"/>
    <property type="match status" value="1"/>
</dbReference>
<dbReference type="NCBIfam" id="NF011925">
    <property type="entry name" value="PRK15396.1"/>
    <property type="match status" value="1"/>
</dbReference>
<dbReference type="PANTHER" id="PTHR38763:SF1">
    <property type="entry name" value="MAJOR OUTER MEMBRANE LIPOPROTEIN LPP"/>
    <property type="match status" value="1"/>
</dbReference>
<dbReference type="PANTHER" id="PTHR38763">
    <property type="entry name" value="MAJOR OUTER MEMBRANE PROLIPOPROTEIN LPP"/>
    <property type="match status" value="1"/>
</dbReference>
<dbReference type="Pfam" id="PF04728">
    <property type="entry name" value="LPP"/>
    <property type="match status" value="1"/>
</dbReference>
<dbReference type="PIRSF" id="PIRSF002855">
    <property type="entry name" value="Murein-lipoprotein"/>
    <property type="match status" value="1"/>
</dbReference>
<dbReference type="SUPFAM" id="SSF58042">
    <property type="entry name" value="Outer membrane lipoprotein"/>
    <property type="match status" value="1"/>
</dbReference>
<dbReference type="PROSITE" id="PS51257">
    <property type="entry name" value="PROKAR_LIPOPROTEIN"/>
    <property type="match status" value="1"/>
</dbReference>
<keyword id="KW-0998">Cell outer membrane</keyword>
<keyword id="KW-0134">Cell wall</keyword>
<keyword id="KW-0175">Coiled coil</keyword>
<keyword id="KW-0449">Lipoprotein</keyword>
<keyword id="KW-0472">Membrane</keyword>
<keyword id="KW-0564">Palmitate</keyword>
<keyword id="KW-0572">Peptidoglycan-anchor</keyword>
<keyword id="KW-1185">Reference proteome</keyword>
<keyword id="KW-0677">Repeat</keyword>
<keyword id="KW-0964">Secreted</keyword>
<keyword id="KW-0732">Signal</keyword>
<keyword id="KW-0843">Virulence</keyword>
<organism>
    <name type="scientific">Salmonella typhimurium (strain LT2 / SGSC1412 / ATCC 700720)</name>
    <dbReference type="NCBI Taxonomy" id="99287"/>
    <lineage>
        <taxon>Bacteria</taxon>
        <taxon>Pseudomonadati</taxon>
        <taxon>Pseudomonadota</taxon>
        <taxon>Gammaproteobacteria</taxon>
        <taxon>Enterobacterales</taxon>
        <taxon>Enterobacteriaceae</taxon>
        <taxon>Salmonella</taxon>
    </lineage>
</organism>
<evidence type="ECO:0000250" key="1">
    <source>
        <dbReference type="UniProtKB" id="E8XH69"/>
    </source>
</evidence>
<evidence type="ECO:0000255" key="2">
    <source>
        <dbReference type="HAMAP-Rule" id="MF_00843"/>
    </source>
</evidence>
<evidence type="ECO:0000269" key="3">
    <source>
    </source>
</evidence>
<evidence type="ECO:0000305" key="4"/>
<comment type="function">
    <text evidence="2 3">Plays an important role in virulence (PubMed:15213144). A highly abundant outer membrane lipoprotein that controls the distance between the inner and outer membranes. The only protein known to be covalently linked to the peptidoglycan network (PGN). Also non-covalently binds the PGN. The link between the cell outer membrane and PGN contributes to maintenance of the structural and functional integrity of the cell envelope, and maintains the correct distance between the PGN and the outer membrane (By similarity).</text>
</comment>
<comment type="subunit">
    <text evidence="2">Homotrimer.</text>
</comment>
<comment type="subcellular location">
    <subcellularLocation>
        <location evidence="2">Cell outer membrane</location>
        <topology evidence="2">Lipid-anchor</topology>
        <orientation evidence="2">Periplasmic side</orientation>
    </subcellularLocation>
    <subcellularLocation>
        <location evidence="2">Secreted</location>
        <location evidence="2">Cell wall</location>
        <topology evidence="2">Peptidoglycan-anchor</topology>
    </subcellularLocation>
    <text evidence="2">Attached via its lipidated N-terminus to the inner leaflet of the outer membrane. Attached to the peptidoglycan network (PGN) via its C-terminus.</text>
</comment>
<comment type="induction">
    <text evidence="1">This gene is probably poorly expressed.</text>
</comment>
<comment type="disruption phenotype">
    <text evidence="3">The integrity of the cell envelope in a lpp null mutant (double-knockout) is not affected.</text>
</comment>
<comment type="similarity">
    <text evidence="2">Belongs to the Lpp family.</text>
</comment>
<reference key="1">
    <citation type="journal article" date="2004" name="Infect. Immun.">
        <title>The two murein lipoproteins of Salmonella enterica serovar typhimurium contribute to the virulence of the organism.</title>
        <authorList>
            <person name="Sha J."/>
            <person name="Fadl A.A."/>
            <person name="Klimpel G.R."/>
            <person name="Niesel D.W."/>
            <person name="Popov V.L."/>
            <person name="Chopra A.K."/>
        </authorList>
    </citation>
    <scope>NUCLEOTIDE SEQUENCE [GENOMIC DNA]</scope>
    <scope>FUNCTION</scope>
    <scope>DISRUPTION PHENOTYPE</scope>
</reference>
<reference key="2">
    <citation type="journal article" date="2001" name="Nature">
        <title>Complete genome sequence of Salmonella enterica serovar Typhimurium LT2.</title>
        <authorList>
            <person name="McClelland M."/>
            <person name="Sanderson K.E."/>
            <person name="Spieth J."/>
            <person name="Clifton S.W."/>
            <person name="Latreille P."/>
            <person name="Courtney L."/>
            <person name="Porwollik S."/>
            <person name="Ali J."/>
            <person name="Dante M."/>
            <person name="Du F."/>
            <person name="Hou S."/>
            <person name="Layman D."/>
            <person name="Leonard S."/>
            <person name="Nguyen C."/>
            <person name="Scott K."/>
            <person name="Holmes A."/>
            <person name="Grewal N."/>
            <person name="Mulvaney E."/>
            <person name="Ryan E."/>
            <person name="Sun H."/>
            <person name="Florea L."/>
            <person name="Miller W."/>
            <person name="Stoneking T."/>
            <person name="Nhan M."/>
            <person name="Waterston R."/>
            <person name="Wilson R.K."/>
        </authorList>
    </citation>
    <scope>NUCLEOTIDE SEQUENCE [LARGE SCALE GENOMIC DNA]</scope>
    <source>
        <strain>LT2 / SGSC1412 / ATCC 700720</strain>
    </source>
</reference>
<gene>
    <name evidence="2" type="primary">lpp2</name>
    <name type="synonym">lppB</name>
    <name type="ordered locus">STM1376</name>
</gene>
<sequence length="79" mass="8492">MNRTNQLILGAVVLGSTLLAGCSSNAKIDQLSSDVQTLSAKVEQLSNDVNAMRSDVQAAKDDAARANQRLDNKVFRICK</sequence>
<accession>Q8ZPP9</accession>
<accession>Q6VPQ3</accession>
<protein>
    <recommendedName>
        <fullName evidence="2">Major outer membrane lipoprotein Lpp 2</fullName>
    </recommendedName>
    <alternativeName>
        <fullName evidence="2">Braun lipoprotein 2</fullName>
        <shortName evidence="2">BLP 2</shortName>
    </alternativeName>
    <alternativeName>
        <fullName evidence="2">Murein lipoprotein 2</fullName>
    </alternativeName>
</protein>
<feature type="signal peptide" evidence="2">
    <location>
        <begin position="1"/>
        <end position="21"/>
    </location>
</feature>
<feature type="chain" id="PRO_0000018345" description="Major outer membrane lipoprotein Lpp 2" evidence="2">
    <location>
        <begin position="22"/>
        <end position="79"/>
    </location>
</feature>
<feature type="repeat" evidence="2">
    <location>
        <begin position="25"/>
        <end position="35"/>
    </location>
</feature>
<feature type="repeat" evidence="2">
    <location>
        <begin position="39"/>
        <end position="49"/>
    </location>
</feature>
<feature type="coiled-coil region" evidence="2">
    <location>
        <begin position="28"/>
        <end position="69"/>
    </location>
</feature>
<feature type="modified residue" description="N6-murein peptidoglycan lysine" evidence="4">
    <location>
        <position position="79"/>
    </location>
</feature>
<feature type="lipid moiety-binding region" description="N-palmitoyl cysteine" evidence="2">
    <location>
        <position position="22"/>
    </location>
</feature>
<feature type="lipid moiety-binding region" description="S-diacylglycerol cysteine" evidence="2">
    <location>
        <position position="22"/>
    </location>
</feature>
<name>LPP2_SALTY</name>